<feature type="chain" id="PRO_0000167930" description="Small ribosomal subunit protein bS20">
    <location>
        <begin position="1"/>
        <end position="87"/>
    </location>
</feature>
<feature type="region of interest" description="Disordered" evidence="2">
    <location>
        <begin position="1"/>
        <end position="25"/>
    </location>
</feature>
<feature type="compositionally biased region" description="Basic residues" evidence="2">
    <location>
        <begin position="7"/>
        <end position="22"/>
    </location>
</feature>
<organism>
    <name type="scientific">Bordetella pertussis (strain Tohama I / ATCC BAA-589 / NCTC 13251)</name>
    <dbReference type="NCBI Taxonomy" id="257313"/>
    <lineage>
        <taxon>Bacteria</taxon>
        <taxon>Pseudomonadati</taxon>
        <taxon>Pseudomonadota</taxon>
        <taxon>Betaproteobacteria</taxon>
        <taxon>Burkholderiales</taxon>
        <taxon>Alcaligenaceae</taxon>
        <taxon>Bordetella</taxon>
    </lineage>
</organism>
<keyword id="KW-1185">Reference proteome</keyword>
<keyword id="KW-0687">Ribonucleoprotein</keyword>
<keyword id="KW-0689">Ribosomal protein</keyword>
<keyword id="KW-0694">RNA-binding</keyword>
<keyword id="KW-0699">rRNA-binding</keyword>
<protein>
    <recommendedName>
        <fullName evidence="1">Small ribosomal subunit protein bS20</fullName>
    </recommendedName>
    <alternativeName>
        <fullName evidence="3">30S ribosomal protein S20</fullName>
    </alternativeName>
</protein>
<evidence type="ECO:0000255" key="1">
    <source>
        <dbReference type="HAMAP-Rule" id="MF_00500"/>
    </source>
</evidence>
<evidence type="ECO:0000256" key="2">
    <source>
        <dbReference type="SAM" id="MobiDB-lite"/>
    </source>
</evidence>
<evidence type="ECO:0000305" key="3"/>
<comment type="function">
    <text evidence="1">Binds directly to 16S ribosomal RNA.</text>
</comment>
<comment type="similarity">
    <text evidence="1">Belongs to the bacterial ribosomal protein bS20 family.</text>
</comment>
<accession>Q7VVA6</accession>
<dbReference type="EMBL" id="BX640419">
    <property type="protein sequence ID" value="CAE43048.1"/>
    <property type="molecule type" value="Genomic_DNA"/>
</dbReference>
<dbReference type="RefSeq" id="NP_881377.1">
    <property type="nucleotide sequence ID" value="NC_002929.2"/>
</dbReference>
<dbReference type="RefSeq" id="WP_003812908.1">
    <property type="nucleotide sequence ID" value="NZ_CP039022.1"/>
</dbReference>
<dbReference type="SMR" id="Q7VVA6"/>
<dbReference type="STRING" id="257313.BP2773"/>
<dbReference type="PaxDb" id="257313-BP2773"/>
<dbReference type="GeneID" id="93204343"/>
<dbReference type="KEGG" id="bpe:BP2773"/>
<dbReference type="PATRIC" id="fig|257313.5.peg.2991"/>
<dbReference type="eggNOG" id="COG0268">
    <property type="taxonomic scope" value="Bacteria"/>
</dbReference>
<dbReference type="HOGENOM" id="CLU_160655_4_0_4"/>
<dbReference type="Proteomes" id="UP000002676">
    <property type="component" value="Chromosome"/>
</dbReference>
<dbReference type="GO" id="GO:0005829">
    <property type="term" value="C:cytosol"/>
    <property type="evidence" value="ECO:0007669"/>
    <property type="project" value="TreeGrafter"/>
</dbReference>
<dbReference type="GO" id="GO:0015935">
    <property type="term" value="C:small ribosomal subunit"/>
    <property type="evidence" value="ECO:0007669"/>
    <property type="project" value="TreeGrafter"/>
</dbReference>
<dbReference type="GO" id="GO:0070181">
    <property type="term" value="F:small ribosomal subunit rRNA binding"/>
    <property type="evidence" value="ECO:0007669"/>
    <property type="project" value="TreeGrafter"/>
</dbReference>
<dbReference type="GO" id="GO:0003735">
    <property type="term" value="F:structural constituent of ribosome"/>
    <property type="evidence" value="ECO:0007669"/>
    <property type="project" value="InterPro"/>
</dbReference>
<dbReference type="GO" id="GO:0006412">
    <property type="term" value="P:translation"/>
    <property type="evidence" value="ECO:0007669"/>
    <property type="project" value="UniProtKB-UniRule"/>
</dbReference>
<dbReference type="FunFam" id="1.20.58.110:FF:000001">
    <property type="entry name" value="30S ribosomal protein S20"/>
    <property type="match status" value="1"/>
</dbReference>
<dbReference type="Gene3D" id="1.20.58.110">
    <property type="entry name" value="Ribosomal protein S20"/>
    <property type="match status" value="1"/>
</dbReference>
<dbReference type="HAMAP" id="MF_00500">
    <property type="entry name" value="Ribosomal_bS20"/>
    <property type="match status" value="1"/>
</dbReference>
<dbReference type="InterPro" id="IPR002583">
    <property type="entry name" value="Ribosomal_bS20"/>
</dbReference>
<dbReference type="InterPro" id="IPR036510">
    <property type="entry name" value="Ribosomal_bS20_sf"/>
</dbReference>
<dbReference type="NCBIfam" id="TIGR00029">
    <property type="entry name" value="S20"/>
    <property type="match status" value="1"/>
</dbReference>
<dbReference type="PANTHER" id="PTHR33398">
    <property type="entry name" value="30S RIBOSOMAL PROTEIN S20"/>
    <property type="match status" value="1"/>
</dbReference>
<dbReference type="PANTHER" id="PTHR33398:SF1">
    <property type="entry name" value="SMALL RIBOSOMAL SUBUNIT PROTEIN BS20C"/>
    <property type="match status" value="1"/>
</dbReference>
<dbReference type="Pfam" id="PF01649">
    <property type="entry name" value="Ribosomal_S20p"/>
    <property type="match status" value="1"/>
</dbReference>
<dbReference type="SUPFAM" id="SSF46992">
    <property type="entry name" value="Ribosomal protein S20"/>
    <property type="match status" value="1"/>
</dbReference>
<name>RS20_BORPE</name>
<gene>
    <name evidence="1" type="primary">rpsT</name>
    <name type="ordered locus">BP2773</name>
</gene>
<proteinExistence type="inferred from homology"/>
<reference key="1">
    <citation type="journal article" date="2003" name="Nat. Genet.">
        <title>Comparative analysis of the genome sequences of Bordetella pertussis, Bordetella parapertussis and Bordetella bronchiseptica.</title>
        <authorList>
            <person name="Parkhill J."/>
            <person name="Sebaihia M."/>
            <person name="Preston A."/>
            <person name="Murphy L.D."/>
            <person name="Thomson N.R."/>
            <person name="Harris D.E."/>
            <person name="Holden M.T.G."/>
            <person name="Churcher C.M."/>
            <person name="Bentley S.D."/>
            <person name="Mungall K.L."/>
            <person name="Cerdeno-Tarraga A.-M."/>
            <person name="Temple L."/>
            <person name="James K.D."/>
            <person name="Harris B."/>
            <person name="Quail M.A."/>
            <person name="Achtman M."/>
            <person name="Atkin R."/>
            <person name="Baker S."/>
            <person name="Basham D."/>
            <person name="Bason N."/>
            <person name="Cherevach I."/>
            <person name="Chillingworth T."/>
            <person name="Collins M."/>
            <person name="Cronin A."/>
            <person name="Davis P."/>
            <person name="Doggett J."/>
            <person name="Feltwell T."/>
            <person name="Goble A."/>
            <person name="Hamlin N."/>
            <person name="Hauser H."/>
            <person name="Holroyd S."/>
            <person name="Jagels K."/>
            <person name="Leather S."/>
            <person name="Moule S."/>
            <person name="Norberczak H."/>
            <person name="O'Neil S."/>
            <person name="Ormond D."/>
            <person name="Price C."/>
            <person name="Rabbinowitsch E."/>
            <person name="Rutter S."/>
            <person name="Sanders M."/>
            <person name="Saunders D."/>
            <person name="Seeger K."/>
            <person name="Sharp S."/>
            <person name="Simmonds M."/>
            <person name="Skelton J."/>
            <person name="Squares R."/>
            <person name="Squares S."/>
            <person name="Stevens K."/>
            <person name="Unwin L."/>
            <person name="Whitehead S."/>
            <person name="Barrell B.G."/>
            <person name="Maskell D.J."/>
        </authorList>
    </citation>
    <scope>NUCLEOTIDE SEQUENCE [LARGE SCALE GENOMIC DNA]</scope>
    <source>
        <strain>Tohama I / ATCC BAA-589 / NCTC 13251</strain>
    </source>
</reference>
<sequence>MANTAQARKRARQSVQRNKHNSSLRSMLRTAIKRVRQSIATGDKAAAGETLRKATSVIDSVADKNIIHKNKAARHKSRLAAAVKALA</sequence>